<comment type="function">
    <text evidence="1">Binds directly to 23S rRNA. The L1 stalk is quite mobile in the ribosome, and is involved in E site tRNA release.</text>
</comment>
<comment type="function">
    <text evidence="1">Protein L1 is also a translational repressor protein, it controls the translation of the L11 operon by binding to its mRNA.</text>
</comment>
<comment type="subunit">
    <text evidence="1">Part of the 50S ribosomal subunit.</text>
</comment>
<comment type="similarity">
    <text evidence="1">Belongs to the universal ribosomal protein uL1 family.</text>
</comment>
<gene>
    <name evidence="1" type="primary">rplA</name>
    <name type="ordered locus">MSC_0995</name>
</gene>
<name>RL1_MYCMS</name>
<accession>Q6MRY7</accession>
<proteinExistence type="inferred from homology"/>
<keyword id="KW-1185">Reference proteome</keyword>
<keyword id="KW-0678">Repressor</keyword>
<keyword id="KW-0687">Ribonucleoprotein</keyword>
<keyword id="KW-0689">Ribosomal protein</keyword>
<keyword id="KW-0694">RNA-binding</keyword>
<keyword id="KW-0699">rRNA-binding</keyword>
<keyword id="KW-0810">Translation regulation</keyword>
<keyword id="KW-0820">tRNA-binding</keyword>
<dbReference type="EMBL" id="BX293980">
    <property type="protein sequence ID" value="CAE77604.1"/>
    <property type="molecule type" value="Genomic_DNA"/>
</dbReference>
<dbReference type="RefSeq" id="NP_975962.1">
    <property type="nucleotide sequence ID" value="NC_005364.2"/>
</dbReference>
<dbReference type="RefSeq" id="WP_011167141.1">
    <property type="nucleotide sequence ID" value="NC_005364.2"/>
</dbReference>
<dbReference type="SMR" id="Q6MRY7"/>
<dbReference type="STRING" id="272632.MSC_0995"/>
<dbReference type="KEGG" id="mmy:MSC_0995"/>
<dbReference type="PATRIC" id="fig|272632.4.peg.1080"/>
<dbReference type="eggNOG" id="COG0081">
    <property type="taxonomic scope" value="Bacteria"/>
</dbReference>
<dbReference type="HOGENOM" id="CLU_062853_0_0_14"/>
<dbReference type="Proteomes" id="UP000001016">
    <property type="component" value="Chromosome"/>
</dbReference>
<dbReference type="GO" id="GO:0015934">
    <property type="term" value="C:large ribosomal subunit"/>
    <property type="evidence" value="ECO:0007669"/>
    <property type="project" value="InterPro"/>
</dbReference>
<dbReference type="GO" id="GO:0019843">
    <property type="term" value="F:rRNA binding"/>
    <property type="evidence" value="ECO:0007669"/>
    <property type="project" value="UniProtKB-UniRule"/>
</dbReference>
<dbReference type="GO" id="GO:0003735">
    <property type="term" value="F:structural constituent of ribosome"/>
    <property type="evidence" value="ECO:0007669"/>
    <property type="project" value="InterPro"/>
</dbReference>
<dbReference type="GO" id="GO:0000049">
    <property type="term" value="F:tRNA binding"/>
    <property type="evidence" value="ECO:0007669"/>
    <property type="project" value="UniProtKB-KW"/>
</dbReference>
<dbReference type="GO" id="GO:0006417">
    <property type="term" value="P:regulation of translation"/>
    <property type="evidence" value="ECO:0007669"/>
    <property type="project" value="UniProtKB-KW"/>
</dbReference>
<dbReference type="GO" id="GO:0006412">
    <property type="term" value="P:translation"/>
    <property type="evidence" value="ECO:0007669"/>
    <property type="project" value="UniProtKB-UniRule"/>
</dbReference>
<dbReference type="CDD" id="cd00403">
    <property type="entry name" value="Ribosomal_L1"/>
    <property type="match status" value="1"/>
</dbReference>
<dbReference type="FunFam" id="3.40.50.790:FF:000001">
    <property type="entry name" value="50S ribosomal protein L1"/>
    <property type="match status" value="1"/>
</dbReference>
<dbReference type="Gene3D" id="3.30.190.20">
    <property type="match status" value="1"/>
</dbReference>
<dbReference type="Gene3D" id="3.40.50.790">
    <property type="match status" value="1"/>
</dbReference>
<dbReference type="HAMAP" id="MF_01318_B">
    <property type="entry name" value="Ribosomal_uL1_B"/>
    <property type="match status" value="1"/>
</dbReference>
<dbReference type="InterPro" id="IPR005878">
    <property type="entry name" value="Ribosom_uL1_bac-type"/>
</dbReference>
<dbReference type="InterPro" id="IPR002143">
    <property type="entry name" value="Ribosomal_uL1"/>
</dbReference>
<dbReference type="InterPro" id="IPR023674">
    <property type="entry name" value="Ribosomal_uL1-like"/>
</dbReference>
<dbReference type="InterPro" id="IPR028364">
    <property type="entry name" value="Ribosomal_uL1/biogenesis"/>
</dbReference>
<dbReference type="InterPro" id="IPR016095">
    <property type="entry name" value="Ribosomal_uL1_3-a/b-sand"/>
</dbReference>
<dbReference type="InterPro" id="IPR023673">
    <property type="entry name" value="Ribosomal_uL1_CS"/>
</dbReference>
<dbReference type="NCBIfam" id="TIGR01169">
    <property type="entry name" value="rplA_bact"/>
    <property type="match status" value="1"/>
</dbReference>
<dbReference type="PANTHER" id="PTHR36427">
    <property type="entry name" value="54S RIBOSOMAL PROTEIN L1, MITOCHONDRIAL"/>
    <property type="match status" value="1"/>
</dbReference>
<dbReference type="PANTHER" id="PTHR36427:SF3">
    <property type="entry name" value="LARGE RIBOSOMAL SUBUNIT PROTEIN UL1M"/>
    <property type="match status" value="1"/>
</dbReference>
<dbReference type="Pfam" id="PF00687">
    <property type="entry name" value="Ribosomal_L1"/>
    <property type="match status" value="1"/>
</dbReference>
<dbReference type="PIRSF" id="PIRSF002155">
    <property type="entry name" value="Ribosomal_L1"/>
    <property type="match status" value="1"/>
</dbReference>
<dbReference type="SUPFAM" id="SSF56808">
    <property type="entry name" value="Ribosomal protein L1"/>
    <property type="match status" value="1"/>
</dbReference>
<dbReference type="PROSITE" id="PS01199">
    <property type="entry name" value="RIBOSOMAL_L1"/>
    <property type="match status" value="1"/>
</dbReference>
<evidence type="ECO:0000255" key="1">
    <source>
        <dbReference type="HAMAP-Rule" id="MF_01318"/>
    </source>
</evidence>
<evidence type="ECO:0000305" key="2"/>
<feature type="chain" id="PRO_0000125690" description="Large ribosomal subunit protein uL1">
    <location>
        <begin position="1"/>
        <end position="226"/>
    </location>
</feature>
<protein>
    <recommendedName>
        <fullName evidence="1">Large ribosomal subunit protein uL1</fullName>
    </recommendedName>
    <alternativeName>
        <fullName evidence="2">50S ribosomal protein L1</fullName>
    </alternativeName>
</protein>
<reference key="1">
    <citation type="journal article" date="2004" name="Genome Res.">
        <title>The genome sequence of Mycoplasma mycoides subsp. mycoides SC type strain PG1T, the causative agent of contagious bovine pleuropneumonia (CBPP).</title>
        <authorList>
            <person name="Westberg J."/>
            <person name="Persson A."/>
            <person name="Holmberg A."/>
            <person name="Goesmann A."/>
            <person name="Lundeberg J."/>
            <person name="Johansson K.-E."/>
            <person name="Pettersson B."/>
            <person name="Uhlen M."/>
        </authorList>
    </citation>
    <scope>NUCLEOTIDE SEQUENCE [LARGE SCALE GENOMIC DNA]</scope>
    <source>
        <strain>CCUG 32753 / NCTC 10114 / PG1</strain>
    </source>
</reference>
<organism>
    <name type="scientific">Mycoplasma mycoides subsp. mycoides SC (strain CCUG 32753 / NCTC 10114 / PG1)</name>
    <dbReference type="NCBI Taxonomy" id="272632"/>
    <lineage>
        <taxon>Bacteria</taxon>
        <taxon>Bacillati</taxon>
        <taxon>Mycoplasmatota</taxon>
        <taxon>Mollicutes</taxon>
        <taxon>Mycoplasmataceae</taxon>
        <taxon>Mycoplasma</taxon>
    </lineage>
</organism>
<sequence length="226" mass="25066">MAKISKRFKEALSKVEKNKVYPLTQALDLAKQTSTTKFDSTVEVAFNLNIDPRKADQQIRGAVVLPAGTGKTQRVLVLTNTKTKEAEQAKADIVGGEELINRIKNENWFDFDIIVATPEMMAKLGAIGKILGPKGLMPNPKTGTVTIDVAKAVDDIKKRKVEYRADKEGNIHLIIGKVSFEIEKLEENFKAVIDEIRRVKPQTVKGDYIKNITLSTTMGPGIKVQF</sequence>